<gene>
    <name evidence="8" type="ORF">FPRO05_10296</name>
</gene>
<organism evidence="7">
    <name type="scientific">Gibberella intermedia</name>
    <name type="common">Bulb rot disease fungus</name>
    <name type="synonym">Fusarium proliferatum</name>
    <dbReference type="NCBI Taxonomy" id="948311"/>
    <lineage>
        <taxon>Eukaryota</taxon>
        <taxon>Fungi</taxon>
        <taxon>Dikarya</taxon>
        <taxon>Ascomycota</taxon>
        <taxon>Pezizomycotina</taxon>
        <taxon>Sordariomycetes</taxon>
        <taxon>Hypocreomycetidae</taxon>
        <taxon>Hypocreales</taxon>
        <taxon>Nectriaceae</taxon>
        <taxon>Fusarium</taxon>
        <taxon>Fusarium fujikuroi species complex</taxon>
    </lineage>
</organism>
<keyword id="KW-0020">Allergen</keyword>
<keyword id="KW-0570">Pentose shunt</keyword>
<keyword id="KW-0704">Schiff base</keyword>
<keyword id="KW-0808">Transferase</keyword>
<sequence>MSSSLEQLKATGTTVVSDSGDFVSIGKYKPQDATTNPSLILAASKKAEYAKLIDVAIDYAKQKGGSIDQQVDDALDRLLVEFGKEILKIIPGKVSTEVDARYSFDTEASVNKALHLIELYGEQGISKDRILIKIAATWEGIKAAEILQRDHGINTNLTLMFSLVQAIGAAEAGAYLISPFVGRILDWFKASTKKEYSKEEDPGVQSVKTIFNYYKKYGYNTIVMGASFRNTGEITELAGCDYLTISPNLLEDLLNSNEPVPKKLDASQAASLDIEKKSYINDEALFRFDFNEDQMAVEKLREGISKFAADAVTLKSILKEKLA</sequence>
<feature type="chain" id="PRO_0000447578" description="Transaldolase">
    <location>
        <begin position="1"/>
        <end position="323"/>
    </location>
</feature>
<feature type="active site" description="Schiff-base intermediate with substrate" evidence="2">
    <location>
        <position position="133"/>
    </location>
</feature>
<comment type="function">
    <text evidence="1">Important for the balance of metabolites in the pentose-phosphate pathway. Involved in xylose fermentation to ethanol.</text>
</comment>
<comment type="catalytic activity">
    <reaction evidence="2 3">
        <text>D-sedoheptulose 7-phosphate + D-glyceraldehyde 3-phosphate = D-erythrose 4-phosphate + beta-D-fructose 6-phosphate</text>
        <dbReference type="Rhea" id="RHEA:17053"/>
        <dbReference type="ChEBI" id="CHEBI:16897"/>
        <dbReference type="ChEBI" id="CHEBI:57483"/>
        <dbReference type="ChEBI" id="CHEBI:57634"/>
        <dbReference type="ChEBI" id="CHEBI:59776"/>
        <dbReference type="EC" id="2.2.1.2"/>
    </reaction>
</comment>
<comment type="pathway">
    <text evidence="3">Carbohydrate degradation; pentose phosphate pathway; D-glyceraldehyde 3-phosphate and beta-D-fructose 6-phosphate from D-ribose 5-phosphate and D-xylulose 5-phosphate (non-oxidative stage): step 2/3.</text>
</comment>
<comment type="subunit">
    <text evidence="1">Monomer.</text>
</comment>
<comment type="allergen">
    <text evidence="4">Causes an allergic reaction in human. Binds to IgE in 47% of the 17 patients tested allergic to mold F.proliferatum.</text>
</comment>
<comment type="similarity">
    <text evidence="6">Belongs to the transaldolase family. Type 1 subfamily.</text>
</comment>
<reference evidence="7" key="1">
    <citation type="journal article" date="2014" name="PLoS ONE">
        <title>The Transaldolase, a Novel Allergen of Fusarium proliferatum, Demonstrates IgE Cross-Reactivity with Its Human Analogue.</title>
        <authorList>
            <person name="Chou H."/>
            <person name="Wu K.G."/>
            <person name="Yeh C.C."/>
            <person name="Tai H.Y."/>
            <person name="Tam M.F."/>
            <person name="Chen Y.S."/>
            <person name="Shen H.D."/>
        </authorList>
    </citation>
    <scope>NUCLEOTIDE SEQUENCE [MRNA]</scope>
    <scope>ALLERGEN</scope>
    <source>
        <strain evidence="5">BCRC 30972</strain>
    </source>
</reference>
<reference evidence="8 9" key="2">
    <citation type="submission" date="2017-12" db="EMBL/GenBank/DDBJ databases">
        <title>Genome sequence of the mycotoxigenic crop pathogen Fusarium proliferatum, strain ITEM 2341 from Date Palm.</title>
        <authorList>
            <person name="Almiman B.F."/>
            <person name="Shittu T.A."/>
            <person name="Muthumeenakshi S."/>
            <person name="Baroncelli R."/>
            <person name="Sreenivasaprasada S."/>
        </authorList>
    </citation>
    <scope>NUCLEOTIDE SEQUENCE [LARGE SCALE GENOMIC DNA]</scope>
    <source>
        <strain evidence="8 9">ITEM 2341</strain>
    </source>
</reference>
<proteinExistence type="evidence at protein level"/>
<protein>
    <recommendedName>
        <fullName evidence="2 3 5">Transaldolase</fullName>
        <ecNumber evidence="2 3">2.2.1.2</ecNumber>
    </recommendedName>
    <allergenName evidence="5">Fus p 4.0101</allergenName>
</protein>
<evidence type="ECO:0000250" key="1">
    <source>
        <dbReference type="UniProtKB" id="J9MJK9"/>
    </source>
</evidence>
<evidence type="ECO:0000255" key="2">
    <source>
        <dbReference type="PROSITE-ProRule" id="PRU10019"/>
    </source>
</evidence>
<evidence type="ECO:0000255" key="3">
    <source>
        <dbReference type="RuleBase" id="RU000501"/>
    </source>
</evidence>
<evidence type="ECO:0000269" key="4">
    <source>
    </source>
</evidence>
<evidence type="ECO:0000303" key="5">
    <source>
    </source>
</evidence>
<evidence type="ECO:0000305" key="6"/>
<evidence type="ECO:0000312" key="7">
    <source>
        <dbReference type="EMBL" id="AHY02994.1"/>
    </source>
</evidence>
<evidence type="ECO:0000312" key="8">
    <source>
        <dbReference type="EMBL" id="RBA18648.1"/>
    </source>
</evidence>
<evidence type="ECO:0000312" key="9">
    <source>
        <dbReference type="Proteomes" id="UP000251714"/>
    </source>
</evidence>
<dbReference type="EC" id="2.2.1.2" evidence="2 3"/>
<dbReference type="EMBL" id="KF151224">
    <property type="protein sequence ID" value="AHY02994.1"/>
    <property type="molecule type" value="mRNA"/>
</dbReference>
<dbReference type="EMBL" id="PKMI01000013">
    <property type="protein sequence ID" value="RBA18648.1"/>
    <property type="molecule type" value="Genomic_DNA"/>
</dbReference>
<dbReference type="SMR" id="A0A075DVI9"/>
<dbReference type="Allergome" id="11422">
    <property type="allergen name" value="Fus p 4"/>
</dbReference>
<dbReference type="Allergome" id="11423">
    <property type="allergen name" value="Fus p 4.0101"/>
</dbReference>
<dbReference type="UniPathway" id="UPA00115">
    <property type="reaction ID" value="UER00414"/>
</dbReference>
<dbReference type="Proteomes" id="UP000251714">
    <property type="component" value="Unassembled WGS sequence"/>
</dbReference>
<dbReference type="GO" id="GO:0005737">
    <property type="term" value="C:cytoplasm"/>
    <property type="evidence" value="ECO:0007669"/>
    <property type="project" value="InterPro"/>
</dbReference>
<dbReference type="GO" id="GO:0004801">
    <property type="term" value="F:transaldolase activity"/>
    <property type="evidence" value="ECO:0000250"/>
    <property type="project" value="UniProtKB"/>
</dbReference>
<dbReference type="GO" id="GO:0044577">
    <property type="term" value="P:D-xylose catabolic process to ethanol"/>
    <property type="evidence" value="ECO:0000250"/>
    <property type="project" value="UniProtKB"/>
</dbReference>
<dbReference type="GO" id="GO:0009052">
    <property type="term" value="P:pentose-phosphate shunt, non-oxidative branch"/>
    <property type="evidence" value="ECO:0000250"/>
    <property type="project" value="UniProtKB"/>
</dbReference>
<dbReference type="CDD" id="cd00957">
    <property type="entry name" value="Transaldolase_TalAB"/>
    <property type="match status" value="1"/>
</dbReference>
<dbReference type="FunFam" id="3.20.20.70:FF:000088">
    <property type="entry name" value="Transaldolase"/>
    <property type="match status" value="1"/>
</dbReference>
<dbReference type="Gene3D" id="3.20.20.70">
    <property type="entry name" value="Aldolase class I"/>
    <property type="match status" value="1"/>
</dbReference>
<dbReference type="InterPro" id="IPR013785">
    <property type="entry name" value="Aldolase_TIM"/>
</dbReference>
<dbReference type="InterPro" id="IPR001585">
    <property type="entry name" value="TAL/FSA"/>
</dbReference>
<dbReference type="InterPro" id="IPR004730">
    <property type="entry name" value="Transaldolase_1"/>
</dbReference>
<dbReference type="InterPro" id="IPR018225">
    <property type="entry name" value="Transaldolase_AS"/>
</dbReference>
<dbReference type="NCBIfam" id="TIGR00874">
    <property type="entry name" value="talAB"/>
    <property type="match status" value="1"/>
</dbReference>
<dbReference type="PANTHER" id="PTHR10683">
    <property type="entry name" value="TRANSALDOLASE"/>
    <property type="match status" value="1"/>
</dbReference>
<dbReference type="PANTHER" id="PTHR10683:SF18">
    <property type="entry name" value="TRANSALDOLASE"/>
    <property type="match status" value="1"/>
</dbReference>
<dbReference type="Pfam" id="PF00923">
    <property type="entry name" value="TAL_FSA"/>
    <property type="match status" value="1"/>
</dbReference>
<dbReference type="SUPFAM" id="SSF51569">
    <property type="entry name" value="Aldolase"/>
    <property type="match status" value="1"/>
</dbReference>
<dbReference type="PROSITE" id="PS01054">
    <property type="entry name" value="TRANSALDOLASE_1"/>
    <property type="match status" value="1"/>
</dbReference>
<dbReference type="PROSITE" id="PS00958">
    <property type="entry name" value="TRANSALDOLASE_2"/>
    <property type="match status" value="1"/>
</dbReference>
<name>TAL1_GIBIN</name>
<accession>A0A075DVI9</accession>